<feature type="chain" id="PRO_0000389045" description="Uncharacterized protein ORF79">
    <location>
        <begin position="1"/>
        <end position="79"/>
    </location>
</feature>
<organism>
    <name type="scientific">Acidianus two-tailed virus</name>
    <name type="common">ATV</name>
    <dbReference type="NCBI Taxonomy" id="315953"/>
    <lineage>
        <taxon>Viruses</taxon>
        <taxon>Viruses incertae sedis</taxon>
        <taxon>Bicaudaviridae</taxon>
        <taxon>Bicaudavirus</taxon>
    </lineage>
</organism>
<keyword id="KW-1185">Reference proteome</keyword>
<accession>Q3V4T5</accession>
<organismHost>
    <name type="scientific">Acidianus convivator</name>
    <dbReference type="NCBI Taxonomy" id="269667"/>
</organismHost>
<proteinExistence type="predicted"/>
<dbReference type="EMBL" id="AJ888457">
    <property type="protein sequence ID" value="CAI59879.1"/>
    <property type="molecule type" value="Genomic_DNA"/>
</dbReference>
<dbReference type="RefSeq" id="YP_319834.1">
    <property type="nucleotide sequence ID" value="NC_007409.1"/>
</dbReference>
<dbReference type="GeneID" id="4484281"/>
<dbReference type="KEGG" id="vg:4484281"/>
<dbReference type="OrthoDB" id="39917at10239"/>
<dbReference type="Proteomes" id="UP000002150">
    <property type="component" value="Genome"/>
</dbReference>
<protein>
    <recommendedName>
        <fullName>Uncharacterized protein ORF79</fullName>
    </recommendedName>
</protein>
<sequence length="79" mass="9133">MVEVLRFKDEKEYREWLSWQSGSVKDKASEYERRYPGTVPIVIELDVDTCPYCGGGEGTHIFIPPHLENIISQIVFDSQ</sequence>
<name>Y079_ATV</name>
<reference key="1">
    <citation type="journal article" date="2005" name="Nature">
        <title>Virology: independent virus development outside a host.</title>
        <authorList>
            <person name="Haring M."/>
            <person name="Vestergaard G."/>
            <person name="Rachel R."/>
            <person name="Chen L."/>
            <person name="Garrett R.A."/>
            <person name="Prangishvili D."/>
        </authorList>
    </citation>
    <scope>NUCLEOTIDE SEQUENCE [GENOMIC DNA]</scope>
</reference>